<dbReference type="EC" id="2.7.7.8" evidence="1"/>
<dbReference type="EMBL" id="AE001437">
    <property type="protein sequence ID" value="AAK79773.1"/>
    <property type="molecule type" value="Genomic_DNA"/>
</dbReference>
<dbReference type="PIR" id="B97123">
    <property type="entry name" value="B97123"/>
</dbReference>
<dbReference type="RefSeq" id="NP_348433.1">
    <property type="nucleotide sequence ID" value="NC_003030.1"/>
</dbReference>
<dbReference type="RefSeq" id="WP_010965114.1">
    <property type="nucleotide sequence ID" value="NC_003030.1"/>
</dbReference>
<dbReference type="SMR" id="Q97I45"/>
<dbReference type="STRING" id="272562.CA_C1808"/>
<dbReference type="GeneID" id="44998302"/>
<dbReference type="KEGG" id="cac:CA_C1808"/>
<dbReference type="PATRIC" id="fig|272562.8.peg.2014"/>
<dbReference type="eggNOG" id="COG1185">
    <property type="taxonomic scope" value="Bacteria"/>
</dbReference>
<dbReference type="HOGENOM" id="CLU_004217_2_2_9"/>
<dbReference type="OrthoDB" id="9804305at2"/>
<dbReference type="Proteomes" id="UP000000814">
    <property type="component" value="Chromosome"/>
</dbReference>
<dbReference type="GO" id="GO:0005829">
    <property type="term" value="C:cytosol"/>
    <property type="evidence" value="ECO:0007669"/>
    <property type="project" value="TreeGrafter"/>
</dbReference>
<dbReference type="GO" id="GO:0000175">
    <property type="term" value="F:3'-5'-RNA exonuclease activity"/>
    <property type="evidence" value="ECO:0007669"/>
    <property type="project" value="TreeGrafter"/>
</dbReference>
<dbReference type="GO" id="GO:0000287">
    <property type="term" value="F:magnesium ion binding"/>
    <property type="evidence" value="ECO:0007669"/>
    <property type="project" value="UniProtKB-UniRule"/>
</dbReference>
<dbReference type="GO" id="GO:0004654">
    <property type="term" value="F:polyribonucleotide nucleotidyltransferase activity"/>
    <property type="evidence" value="ECO:0007669"/>
    <property type="project" value="UniProtKB-UniRule"/>
</dbReference>
<dbReference type="GO" id="GO:0003723">
    <property type="term" value="F:RNA binding"/>
    <property type="evidence" value="ECO:0007669"/>
    <property type="project" value="UniProtKB-UniRule"/>
</dbReference>
<dbReference type="GO" id="GO:0006402">
    <property type="term" value="P:mRNA catabolic process"/>
    <property type="evidence" value="ECO:0007669"/>
    <property type="project" value="UniProtKB-UniRule"/>
</dbReference>
<dbReference type="GO" id="GO:0006396">
    <property type="term" value="P:RNA processing"/>
    <property type="evidence" value="ECO:0007669"/>
    <property type="project" value="InterPro"/>
</dbReference>
<dbReference type="CDD" id="cd02393">
    <property type="entry name" value="KH-I_PNPase"/>
    <property type="match status" value="1"/>
</dbReference>
<dbReference type="CDD" id="cd11363">
    <property type="entry name" value="RNase_PH_PNPase_1"/>
    <property type="match status" value="1"/>
</dbReference>
<dbReference type="CDD" id="cd11364">
    <property type="entry name" value="RNase_PH_PNPase_2"/>
    <property type="match status" value="1"/>
</dbReference>
<dbReference type="CDD" id="cd04472">
    <property type="entry name" value="S1_PNPase"/>
    <property type="match status" value="1"/>
</dbReference>
<dbReference type="FunFam" id="2.40.50.140:FF:000023">
    <property type="entry name" value="Polyribonucleotide nucleotidyltransferase"/>
    <property type="match status" value="1"/>
</dbReference>
<dbReference type="FunFam" id="3.30.1370.10:FF:000001">
    <property type="entry name" value="Polyribonucleotide nucleotidyltransferase"/>
    <property type="match status" value="1"/>
</dbReference>
<dbReference type="FunFam" id="3.30.230.70:FF:000001">
    <property type="entry name" value="Polyribonucleotide nucleotidyltransferase"/>
    <property type="match status" value="1"/>
</dbReference>
<dbReference type="FunFam" id="3.30.230.70:FF:000002">
    <property type="entry name" value="Polyribonucleotide nucleotidyltransferase"/>
    <property type="match status" value="1"/>
</dbReference>
<dbReference type="Gene3D" id="3.30.230.70">
    <property type="entry name" value="GHMP Kinase, N-terminal domain"/>
    <property type="match status" value="2"/>
</dbReference>
<dbReference type="Gene3D" id="3.30.1370.10">
    <property type="entry name" value="K Homology domain, type 1"/>
    <property type="match status" value="1"/>
</dbReference>
<dbReference type="Gene3D" id="2.40.50.140">
    <property type="entry name" value="Nucleic acid-binding proteins"/>
    <property type="match status" value="1"/>
</dbReference>
<dbReference type="HAMAP" id="MF_01595">
    <property type="entry name" value="PNPase"/>
    <property type="match status" value="1"/>
</dbReference>
<dbReference type="InterPro" id="IPR001247">
    <property type="entry name" value="ExoRNase_PH_dom1"/>
</dbReference>
<dbReference type="InterPro" id="IPR015847">
    <property type="entry name" value="ExoRNase_PH_dom2"/>
</dbReference>
<dbReference type="InterPro" id="IPR036345">
    <property type="entry name" value="ExoRNase_PH_dom2_sf"/>
</dbReference>
<dbReference type="InterPro" id="IPR004087">
    <property type="entry name" value="KH_dom"/>
</dbReference>
<dbReference type="InterPro" id="IPR004088">
    <property type="entry name" value="KH_dom_type_1"/>
</dbReference>
<dbReference type="InterPro" id="IPR036612">
    <property type="entry name" value="KH_dom_type_1_sf"/>
</dbReference>
<dbReference type="InterPro" id="IPR012340">
    <property type="entry name" value="NA-bd_OB-fold"/>
</dbReference>
<dbReference type="InterPro" id="IPR012162">
    <property type="entry name" value="PNPase"/>
</dbReference>
<dbReference type="InterPro" id="IPR027408">
    <property type="entry name" value="PNPase/RNase_PH_dom_sf"/>
</dbReference>
<dbReference type="InterPro" id="IPR015848">
    <property type="entry name" value="PNPase_PH_RNA-bd_bac/org-type"/>
</dbReference>
<dbReference type="InterPro" id="IPR036456">
    <property type="entry name" value="PNPase_PH_RNA-bd_sf"/>
</dbReference>
<dbReference type="InterPro" id="IPR020568">
    <property type="entry name" value="Ribosomal_Su5_D2-typ_SF"/>
</dbReference>
<dbReference type="InterPro" id="IPR003029">
    <property type="entry name" value="S1_domain"/>
</dbReference>
<dbReference type="NCBIfam" id="TIGR03591">
    <property type="entry name" value="polynuc_phos"/>
    <property type="match status" value="1"/>
</dbReference>
<dbReference type="NCBIfam" id="NF008805">
    <property type="entry name" value="PRK11824.1"/>
    <property type="match status" value="1"/>
</dbReference>
<dbReference type="PANTHER" id="PTHR11252">
    <property type="entry name" value="POLYRIBONUCLEOTIDE NUCLEOTIDYLTRANSFERASE"/>
    <property type="match status" value="1"/>
</dbReference>
<dbReference type="PANTHER" id="PTHR11252:SF0">
    <property type="entry name" value="POLYRIBONUCLEOTIDE NUCLEOTIDYLTRANSFERASE 1, MITOCHONDRIAL"/>
    <property type="match status" value="1"/>
</dbReference>
<dbReference type="Pfam" id="PF00013">
    <property type="entry name" value="KH_1"/>
    <property type="match status" value="1"/>
</dbReference>
<dbReference type="Pfam" id="PF03726">
    <property type="entry name" value="PNPase"/>
    <property type="match status" value="1"/>
</dbReference>
<dbReference type="Pfam" id="PF01138">
    <property type="entry name" value="RNase_PH"/>
    <property type="match status" value="2"/>
</dbReference>
<dbReference type="Pfam" id="PF03725">
    <property type="entry name" value="RNase_PH_C"/>
    <property type="match status" value="1"/>
</dbReference>
<dbReference type="Pfam" id="PF00575">
    <property type="entry name" value="S1"/>
    <property type="match status" value="1"/>
</dbReference>
<dbReference type="PIRSF" id="PIRSF005499">
    <property type="entry name" value="PNPase"/>
    <property type="match status" value="1"/>
</dbReference>
<dbReference type="SMART" id="SM00322">
    <property type="entry name" value="KH"/>
    <property type="match status" value="1"/>
</dbReference>
<dbReference type="SMART" id="SM00316">
    <property type="entry name" value="S1"/>
    <property type="match status" value="1"/>
</dbReference>
<dbReference type="SUPFAM" id="SSF54791">
    <property type="entry name" value="Eukaryotic type KH-domain (KH-domain type I)"/>
    <property type="match status" value="1"/>
</dbReference>
<dbReference type="SUPFAM" id="SSF50249">
    <property type="entry name" value="Nucleic acid-binding proteins"/>
    <property type="match status" value="1"/>
</dbReference>
<dbReference type="SUPFAM" id="SSF46915">
    <property type="entry name" value="Polynucleotide phosphorylase/guanosine pentaphosphate synthase (PNPase/GPSI), domain 3"/>
    <property type="match status" value="1"/>
</dbReference>
<dbReference type="SUPFAM" id="SSF55666">
    <property type="entry name" value="Ribonuclease PH domain 2-like"/>
    <property type="match status" value="2"/>
</dbReference>
<dbReference type="SUPFAM" id="SSF54211">
    <property type="entry name" value="Ribosomal protein S5 domain 2-like"/>
    <property type="match status" value="2"/>
</dbReference>
<dbReference type="PROSITE" id="PS50084">
    <property type="entry name" value="KH_TYPE_1"/>
    <property type="match status" value="1"/>
</dbReference>
<dbReference type="PROSITE" id="PS50126">
    <property type="entry name" value="S1"/>
    <property type="match status" value="1"/>
</dbReference>
<feature type="chain" id="PRO_0000329593" description="Polyribonucleotide nucleotidyltransferase">
    <location>
        <begin position="1"/>
        <end position="703"/>
    </location>
</feature>
<feature type="domain" description="KH" evidence="1">
    <location>
        <begin position="552"/>
        <end position="611"/>
    </location>
</feature>
<feature type="domain" description="S1 motif" evidence="1">
    <location>
        <begin position="621"/>
        <end position="689"/>
    </location>
</feature>
<feature type="binding site" evidence="1">
    <location>
        <position position="485"/>
    </location>
    <ligand>
        <name>Mg(2+)</name>
        <dbReference type="ChEBI" id="CHEBI:18420"/>
    </ligand>
</feature>
<feature type="binding site" evidence="1">
    <location>
        <position position="491"/>
    </location>
    <ligand>
        <name>Mg(2+)</name>
        <dbReference type="ChEBI" id="CHEBI:18420"/>
    </ligand>
</feature>
<proteinExistence type="inferred from homology"/>
<organism>
    <name type="scientific">Clostridium acetobutylicum (strain ATCC 824 / DSM 792 / JCM 1419 / IAM 19013 / LMG 5710 / NBRC 13948 / NRRL B-527 / VKM B-1787 / 2291 / W)</name>
    <dbReference type="NCBI Taxonomy" id="272562"/>
    <lineage>
        <taxon>Bacteria</taxon>
        <taxon>Bacillati</taxon>
        <taxon>Bacillota</taxon>
        <taxon>Clostridia</taxon>
        <taxon>Eubacteriales</taxon>
        <taxon>Clostridiaceae</taxon>
        <taxon>Clostridium</taxon>
    </lineage>
</organism>
<protein>
    <recommendedName>
        <fullName evidence="1">Polyribonucleotide nucleotidyltransferase</fullName>
        <ecNumber evidence="1">2.7.7.8</ecNumber>
    </recommendedName>
    <alternativeName>
        <fullName evidence="1">Polynucleotide phosphorylase</fullName>
        <shortName evidence="1">PNPase</shortName>
    </alternativeName>
</protein>
<keyword id="KW-0963">Cytoplasm</keyword>
<keyword id="KW-0460">Magnesium</keyword>
<keyword id="KW-0479">Metal-binding</keyword>
<keyword id="KW-0548">Nucleotidyltransferase</keyword>
<keyword id="KW-1185">Reference proteome</keyword>
<keyword id="KW-0694">RNA-binding</keyword>
<keyword id="KW-0808">Transferase</keyword>
<reference key="1">
    <citation type="journal article" date="2001" name="J. Bacteriol.">
        <title>Genome sequence and comparative analysis of the solvent-producing bacterium Clostridium acetobutylicum.</title>
        <authorList>
            <person name="Noelling J."/>
            <person name="Breton G."/>
            <person name="Omelchenko M.V."/>
            <person name="Makarova K.S."/>
            <person name="Zeng Q."/>
            <person name="Gibson R."/>
            <person name="Lee H.M."/>
            <person name="Dubois J."/>
            <person name="Qiu D."/>
            <person name="Hitti J."/>
            <person name="Wolf Y.I."/>
            <person name="Tatusov R.L."/>
            <person name="Sabathe F."/>
            <person name="Doucette-Stamm L.A."/>
            <person name="Soucaille P."/>
            <person name="Daly M.J."/>
            <person name="Bennett G.N."/>
            <person name="Koonin E.V."/>
            <person name="Smith D.R."/>
        </authorList>
    </citation>
    <scope>NUCLEOTIDE SEQUENCE [LARGE SCALE GENOMIC DNA]</scope>
    <source>
        <strain>ATCC 824 / DSM 792 / JCM 1419 / IAM 19013 / LMG 5710 / NBRC 13948 / NRRL B-527 / VKM B-1787 / 2291 / W</strain>
    </source>
</reference>
<evidence type="ECO:0000255" key="1">
    <source>
        <dbReference type="HAMAP-Rule" id="MF_01595"/>
    </source>
</evidence>
<gene>
    <name evidence="1" type="primary">pnp</name>
    <name type="ordered locus">CA_C1808</name>
</gene>
<accession>Q97I45</accession>
<sequence>MLHFLETDIAGRKLKVECGKTGMLSNCAMFISYGDTVVMVNVNASEKPREGIDFFPLSIEYEERQYSVGKIPGGFVKREGRPSEKSILHARAIDRPLRPLFPKGYRNDVQVVCTVMSVEQDNLPEILAMNGASMALCLSDIPFTTPVATVSVGCIDGKFVLNPTLEEREKSSLDLTVCATNERVMMLEAGADEIPEDLMIAAIDFGFNACQDIVAFQEKAMKEFGKEKVTPELYHPKEEIEKDVTEFAFESIKEIMYITDRDERNLRLREIKEKISNEFAEKYPDDGADIDEVVYTLQKKVVRNMLLKEHRRPDGRRFDEIRPISCDVDLLPRTHGSGLFTRGLTQVMTVTTLGPIGDAQVIDGLGVEESKRYMHHYNFPPYSTGEVKPLRGPNRREIGHGALAEKALVPLIPSEEEFPYTIRLVSEVLSSNGSTSQASVCGSTLALMDAGVPIKRPAAGIAMGLITSEDLSKEAVITDIQGLEDFFGDMDFKVAGTEKGITAIQVDTKIHGLSKYCIKTAINDARKARLFILEKMVACINEPRKELSTYAPRAYTINIDTDKIRTLIGTGGKTINKIIEETGVKIDIREDGTVFVLSSDADSANRALKMIDDLTKDVKVGEVYLGKVTKITNFGAFVEVLPGKEGLVHISKLDINKVNKVEDVVSVGDEILVKVTDIDNQGRVNLSRKDVLKQQESNNSKEK</sequence>
<comment type="function">
    <text evidence="1">Involved in mRNA degradation. Catalyzes the phosphorolysis of single-stranded polyribonucleotides processively in the 3'- to 5'-direction.</text>
</comment>
<comment type="catalytic activity">
    <reaction evidence="1">
        <text>RNA(n+1) + phosphate = RNA(n) + a ribonucleoside 5'-diphosphate</text>
        <dbReference type="Rhea" id="RHEA:22096"/>
        <dbReference type="Rhea" id="RHEA-COMP:14527"/>
        <dbReference type="Rhea" id="RHEA-COMP:17342"/>
        <dbReference type="ChEBI" id="CHEBI:43474"/>
        <dbReference type="ChEBI" id="CHEBI:57930"/>
        <dbReference type="ChEBI" id="CHEBI:140395"/>
        <dbReference type="EC" id="2.7.7.8"/>
    </reaction>
</comment>
<comment type="cofactor">
    <cofactor evidence="1">
        <name>Mg(2+)</name>
        <dbReference type="ChEBI" id="CHEBI:18420"/>
    </cofactor>
</comment>
<comment type="subcellular location">
    <subcellularLocation>
        <location evidence="1">Cytoplasm</location>
    </subcellularLocation>
</comment>
<comment type="similarity">
    <text evidence="1">Belongs to the polyribonucleotide nucleotidyltransferase family.</text>
</comment>
<name>PNP_CLOAB</name>